<proteinExistence type="inferred from homology"/>
<name>DNAK_STAA9</name>
<protein>
    <recommendedName>
        <fullName evidence="1">Chaperone protein DnaK</fullName>
    </recommendedName>
    <alternativeName>
        <fullName evidence="1">HSP70</fullName>
    </alternativeName>
    <alternativeName>
        <fullName evidence="1">Heat shock 70 kDa protein</fullName>
    </alternativeName>
    <alternativeName>
        <fullName evidence="1">Heat shock protein 70</fullName>
    </alternativeName>
</protein>
<gene>
    <name evidence="1" type="primary">dnaK</name>
    <name type="ordered locus">SaurJH9_1638</name>
</gene>
<feature type="chain" id="PRO_1000079249" description="Chaperone protein DnaK">
    <location>
        <begin position="1"/>
        <end position="610"/>
    </location>
</feature>
<feature type="region of interest" description="Disordered" evidence="2">
    <location>
        <begin position="525"/>
        <end position="544"/>
    </location>
</feature>
<feature type="region of interest" description="Disordered" evidence="2">
    <location>
        <begin position="576"/>
        <end position="610"/>
    </location>
</feature>
<feature type="compositionally biased region" description="Basic and acidic residues" evidence="2">
    <location>
        <begin position="529"/>
        <end position="542"/>
    </location>
</feature>
<feature type="compositionally biased region" description="Low complexity" evidence="2">
    <location>
        <begin position="576"/>
        <end position="592"/>
    </location>
</feature>
<feature type="compositionally biased region" description="Basic and acidic residues" evidence="2">
    <location>
        <begin position="599"/>
        <end position="610"/>
    </location>
</feature>
<feature type="modified residue" description="Phosphothreonine; by autocatalysis" evidence="1">
    <location>
        <position position="173"/>
    </location>
</feature>
<accession>A5ITA8</accession>
<evidence type="ECO:0000255" key="1">
    <source>
        <dbReference type="HAMAP-Rule" id="MF_00332"/>
    </source>
</evidence>
<evidence type="ECO:0000256" key="2">
    <source>
        <dbReference type="SAM" id="MobiDB-lite"/>
    </source>
</evidence>
<organism>
    <name type="scientific">Staphylococcus aureus (strain JH9)</name>
    <dbReference type="NCBI Taxonomy" id="359786"/>
    <lineage>
        <taxon>Bacteria</taxon>
        <taxon>Bacillati</taxon>
        <taxon>Bacillota</taxon>
        <taxon>Bacilli</taxon>
        <taxon>Bacillales</taxon>
        <taxon>Staphylococcaceae</taxon>
        <taxon>Staphylococcus</taxon>
    </lineage>
</organism>
<comment type="function">
    <text evidence="1">Acts as a chaperone.</text>
</comment>
<comment type="induction">
    <text evidence="1">By stress conditions e.g. heat shock.</text>
</comment>
<comment type="similarity">
    <text evidence="1">Belongs to the heat shock protein 70 family.</text>
</comment>
<dbReference type="EMBL" id="CP000703">
    <property type="protein sequence ID" value="ABQ49431.1"/>
    <property type="molecule type" value="Genomic_DNA"/>
</dbReference>
<dbReference type="RefSeq" id="WP_000034716.1">
    <property type="nucleotide sequence ID" value="NC_009487.1"/>
</dbReference>
<dbReference type="SMR" id="A5ITA8"/>
<dbReference type="KEGG" id="saj:SaurJH9_1638"/>
<dbReference type="HOGENOM" id="CLU_005965_2_4_9"/>
<dbReference type="GO" id="GO:0005524">
    <property type="term" value="F:ATP binding"/>
    <property type="evidence" value="ECO:0007669"/>
    <property type="project" value="UniProtKB-UniRule"/>
</dbReference>
<dbReference type="GO" id="GO:0140662">
    <property type="term" value="F:ATP-dependent protein folding chaperone"/>
    <property type="evidence" value="ECO:0007669"/>
    <property type="project" value="InterPro"/>
</dbReference>
<dbReference type="GO" id="GO:0051082">
    <property type="term" value="F:unfolded protein binding"/>
    <property type="evidence" value="ECO:0007669"/>
    <property type="project" value="InterPro"/>
</dbReference>
<dbReference type="CDD" id="cd10234">
    <property type="entry name" value="ASKHA_NBD_HSP70_DnaK-like"/>
    <property type="match status" value="1"/>
</dbReference>
<dbReference type="FunFam" id="2.60.34.10:FF:000014">
    <property type="entry name" value="Chaperone protein DnaK HSP70"/>
    <property type="match status" value="1"/>
</dbReference>
<dbReference type="FunFam" id="1.20.1270.10:FF:000001">
    <property type="entry name" value="Molecular chaperone DnaK"/>
    <property type="match status" value="1"/>
</dbReference>
<dbReference type="FunFam" id="3.30.420.40:FF:000071">
    <property type="entry name" value="Molecular chaperone DnaK"/>
    <property type="match status" value="1"/>
</dbReference>
<dbReference type="FunFam" id="3.90.640.10:FF:000003">
    <property type="entry name" value="Molecular chaperone DnaK"/>
    <property type="match status" value="1"/>
</dbReference>
<dbReference type="Gene3D" id="1.20.1270.10">
    <property type="match status" value="1"/>
</dbReference>
<dbReference type="Gene3D" id="3.30.420.40">
    <property type="match status" value="2"/>
</dbReference>
<dbReference type="Gene3D" id="3.90.640.10">
    <property type="entry name" value="Actin, Chain A, domain 4"/>
    <property type="match status" value="1"/>
</dbReference>
<dbReference type="Gene3D" id="2.60.34.10">
    <property type="entry name" value="Substrate Binding Domain Of DNAk, Chain A, domain 1"/>
    <property type="match status" value="1"/>
</dbReference>
<dbReference type="HAMAP" id="MF_00332">
    <property type="entry name" value="DnaK"/>
    <property type="match status" value="1"/>
</dbReference>
<dbReference type="InterPro" id="IPR043129">
    <property type="entry name" value="ATPase_NBD"/>
</dbReference>
<dbReference type="InterPro" id="IPR012725">
    <property type="entry name" value="Chaperone_DnaK"/>
</dbReference>
<dbReference type="InterPro" id="IPR018181">
    <property type="entry name" value="Heat_shock_70_CS"/>
</dbReference>
<dbReference type="InterPro" id="IPR029048">
    <property type="entry name" value="HSP70_C_sf"/>
</dbReference>
<dbReference type="InterPro" id="IPR029047">
    <property type="entry name" value="HSP70_peptide-bd_sf"/>
</dbReference>
<dbReference type="InterPro" id="IPR013126">
    <property type="entry name" value="Hsp_70_fam"/>
</dbReference>
<dbReference type="NCBIfam" id="NF001413">
    <property type="entry name" value="PRK00290.1"/>
    <property type="match status" value="1"/>
</dbReference>
<dbReference type="NCBIfam" id="TIGR02350">
    <property type="entry name" value="prok_dnaK"/>
    <property type="match status" value="1"/>
</dbReference>
<dbReference type="PANTHER" id="PTHR19375">
    <property type="entry name" value="HEAT SHOCK PROTEIN 70KDA"/>
    <property type="match status" value="1"/>
</dbReference>
<dbReference type="Pfam" id="PF00012">
    <property type="entry name" value="HSP70"/>
    <property type="match status" value="1"/>
</dbReference>
<dbReference type="PRINTS" id="PR00301">
    <property type="entry name" value="HEATSHOCK70"/>
</dbReference>
<dbReference type="SUPFAM" id="SSF53067">
    <property type="entry name" value="Actin-like ATPase domain"/>
    <property type="match status" value="2"/>
</dbReference>
<dbReference type="SUPFAM" id="SSF100934">
    <property type="entry name" value="Heat shock protein 70kD (HSP70), C-terminal subdomain"/>
    <property type="match status" value="1"/>
</dbReference>
<dbReference type="SUPFAM" id="SSF100920">
    <property type="entry name" value="Heat shock protein 70kD (HSP70), peptide-binding domain"/>
    <property type="match status" value="1"/>
</dbReference>
<dbReference type="PROSITE" id="PS00297">
    <property type="entry name" value="HSP70_1"/>
    <property type="match status" value="1"/>
</dbReference>
<dbReference type="PROSITE" id="PS00329">
    <property type="entry name" value="HSP70_2"/>
    <property type="match status" value="1"/>
</dbReference>
<dbReference type="PROSITE" id="PS01036">
    <property type="entry name" value="HSP70_3"/>
    <property type="match status" value="1"/>
</dbReference>
<sequence length="610" mass="66361">MSKIIGIDLGTTNSCVTVLEGDEPKVIQNPEGSRTTPSVVAFKNGETQVGEVAKRQAITNPNTVQSIKRHMGTDYKVDIEGKSYTPQEISAMILQNLKNTAESYLGEKVDKAVITVPAYFNDAERQATKDAGKIAGLEVERIINEPTAAALAYGLDKTDKDEKVLVFDLGGGTFDVSILELGDGVFEVLSTAGDNKLGGDDFDQVIIDYLVAEFKKENGVDLSQDKMALQRLKDAAEKAKKDLSGVSQTQISLPFISAGENGPLHLEVNLTRSKFEELSDSLIRRTMEPTRQAMKDAGLTNSDIDEVILVGGSTRIPAVQEAVKKEIGKEPNKGVNPDEVVAMGAAIQGGVITGDVKDVVLLDVTPLSLGIEILGGRMNTLIERNTTIPTSKSQIYSTAVDNQPSVDVHVLQGERPMAADNKTLGRFQLTDIPPAERGKPQIEVTFDIDKNGIVNVTAKDLGTNKEQRITIQSSSSLSDEEIDRMVKDAEVNAEADKKRREEVDLRNEADSLVFQVEKTLTDLGENIGEEDKKSAEEKKDALKTALEGQDIEDIKSKKEELEKVIQELSAKVYEQAAQQQQQAQGANAGQNNDSTVEDAEFKEVKDDDKK</sequence>
<reference key="1">
    <citation type="submission" date="2007-05" db="EMBL/GenBank/DDBJ databases">
        <title>Complete sequence of chromosome of Staphylococcus aureus subsp. aureus JH9.</title>
        <authorList>
            <consortium name="US DOE Joint Genome Institute"/>
            <person name="Copeland A."/>
            <person name="Lucas S."/>
            <person name="Lapidus A."/>
            <person name="Barry K."/>
            <person name="Detter J.C."/>
            <person name="Glavina del Rio T."/>
            <person name="Hammon N."/>
            <person name="Israni S."/>
            <person name="Pitluck S."/>
            <person name="Chain P."/>
            <person name="Malfatti S."/>
            <person name="Shin M."/>
            <person name="Vergez L."/>
            <person name="Schmutz J."/>
            <person name="Larimer F."/>
            <person name="Land M."/>
            <person name="Hauser L."/>
            <person name="Kyrpides N."/>
            <person name="Kim E."/>
            <person name="Tomasz A."/>
            <person name="Richardson P."/>
        </authorList>
    </citation>
    <scope>NUCLEOTIDE SEQUENCE [LARGE SCALE GENOMIC DNA]</scope>
    <source>
        <strain>JH9</strain>
    </source>
</reference>
<keyword id="KW-0067">ATP-binding</keyword>
<keyword id="KW-0143">Chaperone</keyword>
<keyword id="KW-0547">Nucleotide-binding</keyword>
<keyword id="KW-0597">Phosphoprotein</keyword>
<keyword id="KW-0346">Stress response</keyword>